<gene>
    <name evidence="2" type="primary">tuf2</name>
    <name type="ordered locus">Rru_A2702</name>
</gene>
<proteinExistence type="inferred from homology"/>
<feature type="chain" id="PRO_0000337500" description="Elongation factor Tu 2">
    <location>
        <begin position="1"/>
        <end position="396"/>
    </location>
</feature>
<feature type="domain" description="tr-type G">
    <location>
        <begin position="10"/>
        <end position="206"/>
    </location>
</feature>
<feature type="region of interest" description="G1" evidence="1">
    <location>
        <begin position="19"/>
        <end position="26"/>
    </location>
</feature>
<feature type="region of interest" description="G2" evidence="1">
    <location>
        <begin position="60"/>
        <end position="64"/>
    </location>
</feature>
<feature type="region of interest" description="G3" evidence="1">
    <location>
        <begin position="81"/>
        <end position="84"/>
    </location>
</feature>
<feature type="region of interest" description="G4" evidence="1">
    <location>
        <begin position="136"/>
        <end position="139"/>
    </location>
</feature>
<feature type="region of interest" description="G5" evidence="1">
    <location>
        <begin position="174"/>
        <end position="176"/>
    </location>
</feature>
<feature type="binding site" evidence="2">
    <location>
        <begin position="19"/>
        <end position="26"/>
    </location>
    <ligand>
        <name>GTP</name>
        <dbReference type="ChEBI" id="CHEBI:37565"/>
    </ligand>
</feature>
<feature type="binding site" evidence="2">
    <location>
        <position position="26"/>
    </location>
    <ligand>
        <name>Mg(2+)</name>
        <dbReference type="ChEBI" id="CHEBI:18420"/>
    </ligand>
</feature>
<feature type="binding site" evidence="2">
    <location>
        <begin position="81"/>
        <end position="85"/>
    </location>
    <ligand>
        <name>GTP</name>
        <dbReference type="ChEBI" id="CHEBI:37565"/>
    </ligand>
</feature>
<feature type="binding site" evidence="2">
    <location>
        <begin position="136"/>
        <end position="139"/>
    </location>
    <ligand>
        <name>GTP</name>
        <dbReference type="ChEBI" id="CHEBI:37565"/>
    </ligand>
</feature>
<sequence length="396" mass="43187">MSKEKFARTKPHCNVGTIGHVDHGKTSLTAAITKVLAEAGGATFQAYDQIDKAPEERARGITISTAHVEYETEARHYAHVDCPGHADYVKNMITGAAQMDGAILVVSAADGPMPQTREHILLARQVGVPALVVFLNKCDMVDDEELLELVELEVRELLTSYDFPGDDIPIIKGSALAALEDSDQKLGHDAILELMKAVDDYIPQPERPKDKPFLMPIEDVFSISGRGTVVTGRVERGIVKVGEEIEIIGIRDTQKTTCTGVEMFRKLLDQGEAGDNIGALLRGTKRDDVERGQVLAKPGSITPHTKFKCEAYILTKEEGGRHTPFFSNYRPQFYFRTTDVTGTIELPEGTEMVMPGDNIGMTVQLIAPIAMDEGLRFAIREGGRTVGAGVVASIVQ</sequence>
<protein>
    <recommendedName>
        <fullName evidence="2">Elongation factor Tu 2</fullName>
        <shortName evidence="2">EF-Tu 2</shortName>
        <ecNumber evidence="2">3.6.5.3</ecNumber>
    </recommendedName>
</protein>
<accession>Q2RQU6</accession>
<keyword id="KW-0963">Cytoplasm</keyword>
<keyword id="KW-0251">Elongation factor</keyword>
<keyword id="KW-0342">GTP-binding</keyword>
<keyword id="KW-0378">Hydrolase</keyword>
<keyword id="KW-0460">Magnesium</keyword>
<keyword id="KW-0479">Metal-binding</keyword>
<keyword id="KW-0547">Nucleotide-binding</keyword>
<keyword id="KW-0648">Protein biosynthesis</keyword>
<keyword id="KW-1185">Reference proteome</keyword>
<reference key="1">
    <citation type="journal article" date="2011" name="Stand. Genomic Sci.">
        <title>Complete genome sequence of Rhodospirillum rubrum type strain (S1).</title>
        <authorList>
            <person name="Munk A.C."/>
            <person name="Copeland A."/>
            <person name="Lucas S."/>
            <person name="Lapidus A."/>
            <person name="Del Rio T.G."/>
            <person name="Barry K."/>
            <person name="Detter J.C."/>
            <person name="Hammon N."/>
            <person name="Israni S."/>
            <person name="Pitluck S."/>
            <person name="Brettin T."/>
            <person name="Bruce D."/>
            <person name="Han C."/>
            <person name="Tapia R."/>
            <person name="Gilna P."/>
            <person name="Schmutz J."/>
            <person name="Larimer F."/>
            <person name="Land M."/>
            <person name="Kyrpides N.C."/>
            <person name="Mavromatis K."/>
            <person name="Richardson P."/>
            <person name="Rohde M."/>
            <person name="Goeker M."/>
            <person name="Klenk H.P."/>
            <person name="Zhang Y."/>
            <person name="Roberts G.P."/>
            <person name="Reslewic S."/>
            <person name="Schwartz D.C."/>
        </authorList>
    </citation>
    <scope>NUCLEOTIDE SEQUENCE [LARGE SCALE GENOMIC DNA]</scope>
    <source>
        <strain>ATCC 11170 / ATH 1.1.1 / DSM 467 / LMG 4362 / NCIMB 8255 / S1</strain>
    </source>
</reference>
<comment type="function">
    <text evidence="2">GTP hydrolase that promotes the GTP-dependent binding of aminoacyl-tRNA to the A-site of ribosomes during protein biosynthesis.</text>
</comment>
<comment type="catalytic activity">
    <reaction evidence="2">
        <text>GTP + H2O = GDP + phosphate + H(+)</text>
        <dbReference type="Rhea" id="RHEA:19669"/>
        <dbReference type="ChEBI" id="CHEBI:15377"/>
        <dbReference type="ChEBI" id="CHEBI:15378"/>
        <dbReference type="ChEBI" id="CHEBI:37565"/>
        <dbReference type="ChEBI" id="CHEBI:43474"/>
        <dbReference type="ChEBI" id="CHEBI:58189"/>
        <dbReference type="EC" id="3.6.5.3"/>
    </reaction>
    <physiologicalReaction direction="left-to-right" evidence="2">
        <dbReference type="Rhea" id="RHEA:19670"/>
    </physiologicalReaction>
</comment>
<comment type="subunit">
    <text evidence="2">Monomer.</text>
</comment>
<comment type="subcellular location">
    <subcellularLocation>
        <location evidence="2">Cytoplasm</location>
    </subcellularLocation>
</comment>
<comment type="similarity">
    <text evidence="2">Belongs to the TRAFAC class translation factor GTPase superfamily. Classic translation factor GTPase family. EF-Tu/EF-1A subfamily.</text>
</comment>
<name>EFTU2_RHORT</name>
<evidence type="ECO:0000250" key="1"/>
<evidence type="ECO:0000255" key="2">
    <source>
        <dbReference type="HAMAP-Rule" id="MF_00118"/>
    </source>
</evidence>
<organism>
    <name type="scientific">Rhodospirillum rubrum (strain ATCC 11170 / ATH 1.1.1 / DSM 467 / LMG 4362 / NCIMB 8255 / S1)</name>
    <dbReference type="NCBI Taxonomy" id="269796"/>
    <lineage>
        <taxon>Bacteria</taxon>
        <taxon>Pseudomonadati</taxon>
        <taxon>Pseudomonadota</taxon>
        <taxon>Alphaproteobacteria</taxon>
        <taxon>Rhodospirillales</taxon>
        <taxon>Rhodospirillaceae</taxon>
        <taxon>Rhodospirillum</taxon>
    </lineage>
</organism>
<dbReference type="EC" id="3.6.5.3" evidence="2"/>
<dbReference type="EMBL" id="CP000230">
    <property type="protein sequence ID" value="ABC23499.1"/>
    <property type="molecule type" value="Genomic_DNA"/>
</dbReference>
<dbReference type="RefSeq" id="YP_427786.1">
    <property type="nucleotide sequence ID" value="NC_007643.1"/>
</dbReference>
<dbReference type="SMR" id="Q2RQU6"/>
<dbReference type="STRING" id="269796.Rru_A2702"/>
<dbReference type="EnsemblBacteria" id="ABC23499">
    <property type="protein sequence ID" value="ABC23499"/>
    <property type="gene ID" value="Rru_A2702"/>
</dbReference>
<dbReference type="KEGG" id="rru:Rru_A2702"/>
<dbReference type="PATRIC" id="fig|269796.9.peg.2811"/>
<dbReference type="eggNOG" id="COG0050">
    <property type="taxonomic scope" value="Bacteria"/>
</dbReference>
<dbReference type="HOGENOM" id="CLU_007265_0_0_5"/>
<dbReference type="PhylomeDB" id="Q2RQU6"/>
<dbReference type="Proteomes" id="UP000001929">
    <property type="component" value="Chromosome"/>
</dbReference>
<dbReference type="GO" id="GO:0005829">
    <property type="term" value="C:cytosol"/>
    <property type="evidence" value="ECO:0007669"/>
    <property type="project" value="TreeGrafter"/>
</dbReference>
<dbReference type="GO" id="GO:0005525">
    <property type="term" value="F:GTP binding"/>
    <property type="evidence" value="ECO:0007669"/>
    <property type="project" value="UniProtKB-UniRule"/>
</dbReference>
<dbReference type="GO" id="GO:0003924">
    <property type="term" value="F:GTPase activity"/>
    <property type="evidence" value="ECO:0007669"/>
    <property type="project" value="InterPro"/>
</dbReference>
<dbReference type="GO" id="GO:0097216">
    <property type="term" value="F:guanosine tetraphosphate binding"/>
    <property type="evidence" value="ECO:0007669"/>
    <property type="project" value="UniProtKB-ARBA"/>
</dbReference>
<dbReference type="GO" id="GO:0003746">
    <property type="term" value="F:translation elongation factor activity"/>
    <property type="evidence" value="ECO:0007669"/>
    <property type="project" value="UniProtKB-UniRule"/>
</dbReference>
<dbReference type="CDD" id="cd01884">
    <property type="entry name" value="EF_Tu"/>
    <property type="match status" value="1"/>
</dbReference>
<dbReference type="CDD" id="cd03697">
    <property type="entry name" value="EFTU_II"/>
    <property type="match status" value="1"/>
</dbReference>
<dbReference type="CDD" id="cd03707">
    <property type="entry name" value="EFTU_III"/>
    <property type="match status" value="1"/>
</dbReference>
<dbReference type="FunFam" id="2.40.30.10:FF:000001">
    <property type="entry name" value="Elongation factor Tu"/>
    <property type="match status" value="1"/>
</dbReference>
<dbReference type="FunFam" id="3.40.50.300:FF:000003">
    <property type="entry name" value="Elongation factor Tu"/>
    <property type="match status" value="1"/>
</dbReference>
<dbReference type="Gene3D" id="3.40.50.300">
    <property type="entry name" value="P-loop containing nucleotide triphosphate hydrolases"/>
    <property type="match status" value="1"/>
</dbReference>
<dbReference type="Gene3D" id="2.40.30.10">
    <property type="entry name" value="Translation factors"/>
    <property type="match status" value="2"/>
</dbReference>
<dbReference type="HAMAP" id="MF_00118_B">
    <property type="entry name" value="EF_Tu_B"/>
    <property type="match status" value="1"/>
</dbReference>
<dbReference type="InterPro" id="IPR041709">
    <property type="entry name" value="EF-Tu_GTP-bd"/>
</dbReference>
<dbReference type="InterPro" id="IPR050055">
    <property type="entry name" value="EF-Tu_GTPase"/>
</dbReference>
<dbReference type="InterPro" id="IPR004161">
    <property type="entry name" value="EFTu-like_2"/>
</dbReference>
<dbReference type="InterPro" id="IPR033720">
    <property type="entry name" value="EFTU_2"/>
</dbReference>
<dbReference type="InterPro" id="IPR031157">
    <property type="entry name" value="G_TR_CS"/>
</dbReference>
<dbReference type="InterPro" id="IPR027417">
    <property type="entry name" value="P-loop_NTPase"/>
</dbReference>
<dbReference type="InterPro" id="IPR005225">
    <property type="entry name" value="Small_GTP-bd"/>
</dbReference>
<dbReference type="InterPro" id="IPR000795">
    <property type="entry name" value="T_Tr_GTP-bd_dom"/>
</dbReference>
<dbReference type="InterPro" id="IPR009000">
    <property type="entry name" value="Transl_B-barrel_sf"/>
</dbReference>
<dbReference type="InterPro" id="IPR009001">
    <property type="entry name" value="Transl_elong_EF1A/Init_IF2_C"/>
</dbReference>
<dbReference type="InterPro" id="IPR004541">
    <property type="entry name" value="Transl_elong_EFTu/EF1A_bac/org"/>
</dbReference>
<dbReference type="InterPro" id="IPR004160">
    <property type="entry name" value="Transl_elong_EFTu/EF1A_C"/>
</dbReference>
<dbReference type="NCBIfam" id="TIGR00485">
    <property type="entry name" value="EF-Tu"/>
    <property type="match status" value="1"/>
</dbReference>
<dbReference type="NCBIfam" id="NF000766">
    <property type="entry name" value="PRK00049.1"/>
    <property type="match status" value="1"/>
</dbReference>
<dbReference type="NCBIfam" id="NF009372">
    <property type="entry name" value="PRK12735.1"/>
    <property type="match status" value="1"/>
</dbReference>
<dbReference type="NCBIfam" id="NF009373">
    <property type="entry name" value="PRK12736.1"/>
    <property type="match status" value="1"/>
</dbReference>
<dbReference type="NCBIfam" id="TIGR00231">
    <property type="entry name" value="small_GTP"/>
    <property type="match status" value="1"/>
</dbReference>
<dbReference type="PANTHER" id="PTHR43721:SF22">
    <property type="entry name" value="ELONGATION FACTOR TU, MITOCHONDRIAL"/>
    <property type="match status" value="1"/>
</dbReference>
<dbReference type="PANTHER" id="PTHR43721">
    <property type="entry name" value="ELONGATION FACTOR TU-RELATED"/>
    <property type="match status" value="1"/>
</dbReference>
<dbReference type="Pfam" id="PF00009">
    <property type="entry name" value="GTP_EFTU"/>
    <property type="match status" value="1"/>
</dbReference>
<dbReference type="Pfam" id="PF03144">
    <property type="entry name" value="GTP_EFTU_D2"/>
    <property type="match status" value="1"/>
</dbReference>
<dbReference type="Pfam" id="PF03143">
    <property type="entry name" value="GTP_EFTU_D3"/>
    <property type="match status" value="1"/>
</dbReference>
<dbReference type="PRINTS" id="PR00315">
    <property type="entry name" value="ELONGATNFCT"/>
</dbReference>
<dbReference type="SUPFAM" id="SSF50465">
    <property type="entry name" value="EF-Tu/eEF-1alpha/eIF2-gamma C-terminal domain"/>
    <property type="match status" value="1"/>
</dbReference>
<dbReference type="SUPFAM" id="SSF52540">
    <property type="entry name" value="P-loop containing nucleoside triphosphate hydrolases"/>
    <property type="match status" value="1"/>
</dbReference>
<dbReference type="SUPFAM" id="SSF50447">
    <property type="entry name" value="Translation proteins"/>
    <property type="match status" value="1"/>
</dbReference>
<dbReference type="PROSITE" id="PS00301">
    <property type="entry name" value="G_TR_1"/>
    <property type="match status" value="1"/>
</dbReference>
<dbReference type="PROSITE" id="PS51722">
    <property type="entry name" value="G_TR_2"/>
    <property type="match status" value="1"/>
</dbReference>